<gene>
    <name type="ORF">Dacsa_1386</name>
</gene>
<comment type="function">
    <text evidence="2">May confer stability to the gas vesicle shells. Gas vesicles are small, hollow, gas filled protein structures that are found in several microbial planktonic microorganisms. They allow the positioning of the organism at the favorable depth for growth.</text>
</comment>
<comment type="subcellular location">
    <subcellularLocation>
        <location evidence="1">Gas vesicle shell</location>
    </subcellularLocation>
    <text evidence="1">Binds to the external surface of the gas vesicle.</text>
</comment>
<comment type="similarity">
    <text evidence="2">Belongs to the gas vesicle GvpC family.</text>
</comment>
<protein>
    <recommendedName>
        <fullName evidence="2">35 kDa gas vesicle protein</fullName>
    </recommendedName>
</protein>
<sequence length="243" mass="28318">MVSLREQWNEQARERQREISARKTEIEEARSSIQKELQAQYEARLAATQQLQSELRQFYNNLANDTAGFLERTRTTREQMAQKLEQELTQLITDLENNTAALLQEANQERVRVSQQQKALAIELKNQLAQFHEQLETSVGNWRQETQEQQQQTAAQLREDLNAFSANLMAQVEKLLINLEETRTANAQQQREALFNFRRQLTVDVWGETESDSLKVEENTPSDVWGETESDFLEVEENTPFVT</sequence>
<name>GVP35_DACS8</name>
<reference evidence="4" key="1">
    <citation type="submission" date="2012-04" db="EMBL/GenBank/DDBJ databases">
        <title>Finished genome of Dactylococcopsis salina PCC 8305.</title>
        <authorList>
            <consortium name="US DOE Joint Genome Institute"/>
            <person name="Gugger M."/>
            <person name="Coursin T."/>
            <person name="Rippka R."/>
            <person name="Tandeau De Marsac N."/>
            <person name="Huntemann M."/>
            <person name="Wei C.-L."/>
            <person name="Han J."/>
            <person name="Detter J.C."/>
            <person name="Han C."/>
            <person name="Tapia R."/>
            <person name="Daligault H."/>
            <person name="Chen A."/>
            <person name="Krypides N."/>
            <person name="Mavromatis K."/>
            <person name="Markowitz V."/>
            <person name="Szeto E."/>
            <person name="Ivanova N."/>
            <person name="Ovchinnikova G."/>
            <person name="Pagani I."/>
            <person name="Pati A."/>
            <person name="Goodwin L."/>
            <person name="Peters L."/>
            <person name="Pitluck S."/>
            <person name="Woyke T."/>
            <person name="Kerfeld C."/>
        </authorList>
    </citation>
    <scope>NUCLEOTIDE SEQUENCE [LARGE SCALE GENOMIC DNA]</scope>
    <source>
        <strain>PCC 8305</strain>
    </source>
</reference>
<reference evidence="3" key="2">
    <citation type="journal article" date="1992" name="J. Gen. Microbiol.">
        <title>The homologies of gas vesicle proteins.</title>
        <authorList>
            <person name="Griffiths A.E."/>
            <person name="Walsby A.E."/>
            <person name="Hayes P.K."/>
        </authorList>
    </citation>
    <scope>PROTEIN SEQUENCE OF 2-62</scope>
    <scope>SUBCELLULAR LOCATION</scope>
    <source>
        <strain>PCC 8305</strain>
    </source>
</reference>
<feature type="initiator methionine" description="Removed" evidence="1">
    <location>
        <position position="1"/>
    </location>
</feature>
<feature type="chain" id="PRO_0000182670" description="35 kDa gas vesicle protein">
    <location>
        <begin position="2"/>
        <end position="243"/>
    </location>
</feature>
<feature type="sequence conflict" description="In Ref. 2; AA sequence." evidence="3" ref="2">
    <original>R</original>
    <variation>A</variation>
    <location>
        <position position="44"/>
    </location>
</feature>
<feature type="sequence conflict" description="In Ref. 2; AA sequence." evidence="3" ref="2">
    <original>ELRQFYNNL</original>
    <variation>LXXRFXRFY</variation>
    <location>
        <begin position="54"/>
        <end position="62"/>
    </location>
</feature>
<accession>P81003</accession>
<accession>K9YT56</accession>
<keyword id="KW-0903">Direct protein sequencing</keyword>
<keyword id="KW-0304">Gas vesicle</keyword>
<evidence type="ECO:0000269" key="1">
    <source>
    </source>
</evidence>
<evidence type="ECO:0000303" key="2">
    <source>
    </source>
</evidence>
<evidence type="ECO:0000305" key="3"/>
<evidence type="ECO:0000312" key="4">
    <source>
        <dbReference type="EMBL" id="AFZ50079.1"/>
    </source>
</evidence>
<dbReference type="EMBL" id="CP003944">
    <property type="protein sequence ID" value="AFZ50079.1"/>
    <property type="molecule type" value="Genomic_DNA"/>
</dbReference>
<dbReference type="RefSeq" id="WP_015229083.1">
    <property type="nucleotide sequence ID" value="NC_019780.1"/>
</dbReference>
<dbReference type="SMR" id="P81003"/>
<dbReference type="STRING" id="13035.Dacsa_1386"/>
<dbReference type="KEGG" id="dsl:Dacsa_1386"/>
<dbReference type="HOGENOM" id="CLU_1141091_0_0_3"/>
<dbReference type="OrthoDB" id="587575at2"/>
<dbReference type="Proteomes" id="UP000010482">
    <property type="component" value="Chromosome"/>
</dbReference>
<dbReference type="GO" id="GO:0031411">
    <property type="term" value="C:gas vesicle"/>
    <property type="evidence" value="ECO:0000314"/>
    <property type="project" value="UniProtKB"/>
</dbReference>
<organism>
    <name type="scientific">Dactylococcopsis salina (strain PCC 8305)</name>
    <name type="common">Myxobactron salinum</name>
    <dbReference type="NCBI Taxonomy" id="13035"/>
    <lineage>
        <taxon>Bacteria</taxon>
        <taxon>Bacillati</taxon>
        <taxon>Cyanobacteriota</taxon>
        <taxon>Cyanophyceae</taxon>
        <taxon>Synechococcales</taxon>
        <taxon>Synechococcaceae</taxon>
        <taxon>Dactylococcopsis</taxon>
    </lineage>
</organism>
<proteinExistence type="evidence at protein level"/>